<organism>
    <name type="scientific">Salmonella schwarzengrund (strain CVM19633)</name>
    <dbReference type="NCBI Taxonomy" id="439843"/>
    <lineage>
        <taxon>Bacteria</taxon>
        <taxon>Pseudomonadati</taxon>
        <taxon>Pseudomonadota</taxon>
        <taxon>Gammaproteobacteria</taxon>
        <taxon>Enterobacterales</taxon>
        <taxon>Enterobacteriaceae</taxon>
        <taxon>Salmonella</taxon>
    </lineage>
</organism>
<keyword id="KW-0028">Amino-acid biosynthesis</keyword>
<keyword id="KW-0963">Cytoplasm</keyword>
<keyword id="KW-0220">Diaminopimelate biosynthesis</keyword>
<keyword id="KW-0457">Lysine biosynthesis</keyword>
<keyword id="KW-0520">NAD</keyword>
<keyword id="KW-0521">NADP</keyword>
<keyword id="KW-0560">Oxidoreductase</keyword>
<gene>
    <name evidence="1" type="primary">dapB</name>
    <name type="ordered locus">SeSA_A0070</name>
</gene>
<sequence>MHEAQIRVAIVGAGGRMGRQLIQAAMAMEGVQLGAALEREGSSLLGSDAGELAGVGKTGVIIQSDLASVKDDFDVLVDFTRPEGTLAHLAFCRKHGKGMVIGTTGFDDAGKQAIREASQEIAIVFAANFSVGVNVMLKLLEKAAKVMGDYTDIEIIEAHHRHKVDAPSGTALAMGEAIAGALDKDLKDCAVYSREGYTGERVPGTIGFATVRAGDIVGEHTAMFADIGERVEITHKASSRMTFANGALRSALWLKTKKNGLFDMRDVLGLDVL</sequence>
<dbReference type="EC" id="1.17.1.8" evidence="1"/>
<dbReference type="EMBL" id="CP001127">
    <property type="protein sequence ID" value="ACF90248.1"/>
    <property type="molecule type" value="Genomic_DNA"/>
</dbReference>
<dbReference type="RefSeq" id="WP_000544045.1">
    <property type="nucleotide sequence ID" value="NC_011094.1"/>
</dbReference>
<dbReference type="SMR" id="B4TWQ6"/>
<dbReference type="KEGG" id="sew:SeSA_A0070"/>
<dbReference type="HOGENOM" id="CLU_047479_2_1_6"/>
<dbReference type="UniPathway" id="UPA00034">
    <property type="reaction ID" value="UER00018"/>
</dbReference>
<dbReference type="Proteomes" id="UP000001865">
    <property type="component" value="Chromosome"/>
</dbReference>
<dbReference type="GO" id="GO:0005829">
    <property type="term" value="C:cytosol"/>
    <property type="evidence" value="ECO:0007669"/>
    <property type="project" value="TreeGrafter"/>
</dbReference>
<dbReference type="GO" id="GO:0008839">
    <property type="term" value="F:4-hydroxy-tetrahydrodipicolinate reductase"/>
    <property type="evidence" value="ECO:0007669"/>
    <property type="project" value="UniProtKB-EC"/>
</dbReference>
<dbReference type="GO" id="GO:0051287">
    <property type="term" value="F:NAD binding"/>
    <property type="evidence" value="ECO:0007669"/>
    <property type="project" value="UniProtKB-UniRule"/>
</dbReference>
<dbReference type="GO" id="GO:0050661">
    <property type="term" value="F:NADP binding"/>
    <property type="evidence" value="ECO:0007669"/>
    <property type="project" value="UniProtKB-UniRule"/>
</dbReference>
<dbReference type="GO" id="GO:0016726">
    <property type="term" value="F:oxidoreductase activity, acting on CH or CH2 groups, NAD or NADP as acceptor"/>
    <property type="evidence" value="ECO:0007669"/>
    <property type="project" value="UniProtKB-UniRule"/>
</dbReference>
<dbReference type="GO" id="GO:0019877">
    <property type="term" value="P:diaminopimelate biosynthetic process"/>
    <property type="evidence" value="ECO:0007669"/>
    <property type="project" value="UniProtKB-UniRule"/>
</dbReference>
<dbReference type="GO" id="GO:0009089">
    <property type="term" value="P:lysine biosynthetic process via diaminopimelate"/>
    <property type="evidence" value="ECO:0007669"/>
    <property type="project" value="UniProtKB-UniRule"/>
</dbReference>
<dbReference type="CDD" id="cd02274">
    <property type="entry name" value="DHDPR_N"/>
    <property type="match status" value="1"/>
</dbReference>
<dbReference type="FunFam" id="3.30.360.10:FF:000004">
    <property type="entry name" value="4-hydroxy-tetrahydrodipicolinate reductase"/>
    <property type="match status" value="1"/>
</dbReference>
<dbReference type="FunFam" id="3.40.50.720:FF:000048">
    <property type="entry name" value="4-hydroxy-tetrahydrodipicolinate reductase"/>
    <property type="match status" value="1"/>
</dbReference>
<dbReference type="Gene3D" id="3.30.360.10">
    <property type="entry name" value="Dihydrodipicolinate Reductase, domain 2"/>
    <property type="match status" value="1"/>
</dbReference>
<dbReference type="Gene3D" id="3.40.50.720">
    <property type="entry name" value="NAD(P)-binding Rossmann-like Domain"/>
    <property type="match status" value="1"/>
</dbReference>
<dbReference type="HAMAP" id="MF_00102">
    <property type="entry name" value="DapB"/>
    <property type="match status" value="1"/>
</dbReference>
<dbReference type="InterPro" id="IPR022663">
    <property type="entry name" value="DapB_C"/>
</dbReference>
<dbReference type="InterPro" id="IPR000846">
    <property type="entry name" value="DapB_N"/>
</dbReference>
<dbReference type="InterPro" id="IPR022664">
    <property type="entry name" value="DapB_N_CS"/>
</dbReference>
<dbReference type="InterPro" id="IPR023940">
    <property type="entry name" value="DHDPR_bac"/>
</dbReference>
<dbReference type="InterPro" id="IPR036291">
    <property type="entry name" value="NAD(P)-bd_dom_sf"/>
</dbReference>
<dbReference type="NCBIfam" id="TIGR00036">
    <property type="entry name" value="dapB"/>
    <property type="match status" value="1"/>
</dbReference>
<dbReference type="PANTHER" id="PTHR20836:SF0">
    <property type="entry name" value="4-HYDROXY-TETRAHYDRODIPICOLINATE REDUCTASE 1, CHLOROPLASTIC-RELATED"/>
    <property type="match status" value="1"/>
</dbReference>
<dbReference type="PANTHER" id="PTHR20836">
    <property type="entry name" value="DIHYDRODIPICOLINATE REDUCTASE"/>
    <property type="match status" value="1"/>
</dbReference>
<dbReference type="Pfam" id="PF05173">
    <property type="entry name" value="DapB_C"/>
    <property type="match status" value="1"/>
</dbReference>
<dbReference type="Pfam" id="PF01113">
    <property type="entry name" value="DapB_N"/>
    <property type="match status" value="1"/>
</dbReference>
<dbReference type="PIRSF" id="PIRSF000161">
    <property type="entry name" value="DHPR"/>
    <property type="match status" value="1"/>
</dbReference>
<dbReference type="SUPFAM" id="SSF55347">
    <property type="entry name" value="Glyceraldehyde-3-phosphate dehydrogenase-like, C-terminal domain"/>
    <property type="match status" value="1"/>
</dbReference>
<dbReference type="SUPFAM" id="SSF51735">
    <property type="entry name" value="NAD(P)-binding Rossmann-fold domains"/>
    <property type="match status" value="1"/>
</dbReference>
<dbReference type="PROSITE" id="PS01298">
    <property type="entry name" value="DAPB"/>
    <property type="match status" value="1"/>
</dbReference>
<feature type="chain" id="PRO_1000094001" description="4-hydroxy-tetrahydrodipicolinate reductase">
    <location>
        <begin position="1"/>
        <end position="273"/>
    </location>
</feature>
<feature type="active site" description="Proton donor/acceptor" evidence="1">
    <location>
        <position position="159"/>
    </location>
</feature>
<feature type="active site" description="Proton donor" evidence="1">
    <location>
        <position position="163"/>
    </location>
</feature>
<feature type="binding site" evidence="1">
    <location>
        <begin position="12"/>
        <end position="17"/>
    </location>
    <ligand>
        <name>NAD(+)</name>
        <dbReference type="ChEBI" id="CHEBI:57540"/>
    </ligand>
</feature>
<feature type="binding site" evidence="1">
    <location>
        <position position="38"/>
    </location>
    <ligand>
        <name>NAD(+)</name>
        <dbReference type="ChEBI" id="CHEBI:57540"/>
    </ligand>
</feature>
<feature type="binding site" evidence="1">
    <location>
        <position position="39"/>
    </location>
    <ligand>
        <name>NADP(+)</name>
        <dbReference type="ChEBI" id="CHEBI:58349"/>
    </ligand>
</feature>
<feature type="binding site" evidence="1">
    <location>
        <begin position="102"/>
        <end position="104"/>
    </location>
    <ligand>
        <name>NAD(+)</name>
        <dbReference type="ChEBI" id="CHEBI:57540"/>
    </ligand>
</feature>
<feature type="binding site" evidence="1">
    <location>
        <begin position="126"/>
        <end position="129"/>
    </location>
    <ligand>
        <name>NAD(+)</name>
        <dbReference type="ChEBI" id="CHEBI:57540"/>
    </ligand>
</feature>
<feature type="binding site" evidence="1">
    <location>
        <position position="160"/>
    </location>
    <ligand>
        <name>(S)-2,3,4,5-tetrahydrodipicolinate</name>
        <dbReference type="ChEBI" id="CHEBI:16845"/>
    </ligand>
</feature>
<feature type="binding site" evidence="1">
    <location>
        <begin position="169"/>
        <end position="170"/>
    </location>
    <ligand>
        <name>(S)-2,3,4,5-tetrahydrodipicolinate</name>
        <dbReference type="ChEBI" id="CHEBI:16845"/>
    </ligand>
</feature>
<accession>B4TWQ6</accession>
<proteinExistence type="inferred from homology"/>
<name>DAPB_SALSV</name>
<reference key="1">
    <citation type="journal article" date="2011" name="J. Bacteriol.">
        <title>Comparative genomics of 28 Salmonella enterica isolates: evidence for CRISPR-mediated adaptive sublineage evolution.</title>
        <authorList>
            <person name="Fricke W.F."/>
            <person name="Mammel M.K."/>
            <person name="McDermott P.F."/>
            <person name="Tartera C."/>
            <person name="White D.G."/>
            <person name="Leclerc J.E."/>
            <person name="Ravel J."/>
            <person name="Cebula T.A."/>
        </authorList>
    </citation>
    <scope>NUCLEOTIDE SEQUENCE [LARGE SCALE GENOMIC DNA]</scope>
    <source>
        <strain>CVM19633</strain>
    </source>
</reference>
<evidence type="ECO:0000255" key="1">
    <source>
        <dbReference type="HAMAP-Rule" id="MF_00102"/>
    </source>
</evidence>
<evidence type="ECO:0000305" key="2"/>
<protein>
    <recommendedName>
        <fullName evidence="1">4-hydroxy-tetrahydrodipicolinate reductase</fullName>
        <shortName evidence="1">HTPA reductase</shortName>
        <ecNumber evidence="1">1.17.1.8</ecNumber>
    </recommendedName>
</protein>
<comment type="function">
    <text evidence="1">Catalyzes the conversion of 4-hydroxy-tetrahydrodipicolinate (HTPA) to tetrahydrodipicolinate.</text>
</comment>
<comment type="catalytic activity">
    <reaction evidence="1">
        <text>(S)-2,3,4,5-tetrahydrodipicolinate + NAD(+) + H2O = (2S,4S)-4-hydroxy-2,3,4,5-tetrahydrodipicolinate + NADH + H(+)</text>
        <dbReference type="Rhea" id="RHEA:35323"/>
        <dbReference type="ChEBI" id="CHEBI:15377"/>
        <dbReference type="ChEBI" id="CHEBI:15378"/>
        <dbReference type="ChEBI" id="CHEBI:16845"/>
        <dbReference type="ChEBI" id="CHEBI:57540"/>
        <dbReference type="ChEBI" id="CHEBI:57945"/>
        <dbReference type="ChEBI" id="CHEBI:67139"/>
        <dbReference type="EC" id="1.17.1.8"/>
    </reaction>
</comment>
<comment type="catalytic activity">
    <reaction evidence="1">
        <text>(S)-2,3,4,5-tetrahydrodipicolinate + NADP(+) + H2O = (2S,4S)-4-hydroxy-2,3,4,5-tetrahydrodipicolinate + NADPH + H(+)</text>
        <dbReference type="Rhea" id="RHEA:35331"/>
        <dbReference type="ChEBI" id="CHEBI:15377"/>
        <dbReference type="ChEBI" id="CHEBI:15378"/>
        <dbReference type="ChEBI" id="CHEBI:16845"/>
        <dbReference type="ChEBI" id="CHEBI:57783"/>
        <dbReference type="ChEBI" id="CHEBI:58349"/>
        <dbReference type="ChEBI" id="CHEBI:67139"/>
        <dbReference type="EC" id="1.17.1.8"/>
    </reaction>
</comment>
<comment type="pathway">
    <text evidence="1">Amino-acid biosynthesis; L-lysine biosynthesis via DAP pathway; (S)-tetrahydrodipicolinate from L-aspartate: step 4/4.</text>
</comment>
<comment type="subunit">
    <text evidence="1">Homotetramer.</text>
</comment>
<comment type="subcellular location">
    <subcellularLocation>
        <location evidence="1">Cytoplasm</location>
    </subcellularLocation>
</comment>
<comment type="similarity">
    <text evidence="1">Belongs to the DapB family.</text>
</comment>
<comment type="caution">
    <text evidence="2">Was originally thought to be a dihydrodipicolinate reductase (DHDPR), catalyzing the conversion of dihydrodipicolinate to tetrahydrodipicolinate. However, it was shown in E.coli that the substrate of the enzymatic reaction is not dihydrodipicolinate (DHDP) but in fact (2S,4S)-4-hydroxy-2,3,4,5-tetrahydrodipicolinic acid (HTPA), the product released by the DapA-catalyzed reaction.</text>
</comment>